<protein>
    <recommendedName>
        <fullName evidence="1">L-fucose isomerase</fullName>
        <ecNumber evidence="1">5.3.1.25</ecNumber>
    </recommendedName>
    <alternativeName>
        <fullName evidence="1">6-deoxy-L-galactose isomerase</fullName>
    </alternativeName>
    <alternativeName>
        <fullName>FucIase</fullName>
    </alternativeName>
</protein>
<accession>A7ZQP6</accession>
<keyword id="KW-0119">Carbohydrate metabolism</keyword>
<keyword id="KW-0963">Cytoplasm</keyword>
<keyword id="KW-0294">Fucose metabolism</keyword>
<keyword id="KW-0413">Isomerase</keyword>
<keyword id="KW-0464">Manganese</keyword>
<keyword id="KW-0479">Metal-binding</keyword>
<keyword id="KW-1185">Reference proteome</keyword>
<proteinExistence type="inferred from homology"/>
<name>FUCI_ECO24</name>
<reference key="1">
    <citation type="journal article" date="2008" name="J. Bacteriol.">
        <title>The pangenome structure of Escherichia coli: comparative genomic analysis of E. coli commensal and pathogenic isolates.</title>
        <authorList>
            <person name="Rasko D.A."/>
            <person name="Rosovitz M.J."/>
            <person name="Myers G.S.A."/>
            <person name="Mongodin E.F."/>
            <person name="Fricke W.F."/>
            <person name="Gajer P."/>
            <person name="Crabtree J."/>
            <person name="Sebaihia M."/>
            <person name="Thomson N.R."/>
            <person name="Chaudhuri R."/>
            <person name="Henderson I.R."/>
            <person name="Sperandio V."/>
            <person name="Ravel J."/>
        </authorList>
    </citation>
    <scope>NUCLEOTIDE SEQUENCE [LARGE SCALE GENOMIC DNA]</scope>
    <source>
        <strain>E24377A / ETEC</strain>
    </source>
</reference>
<organism>
    <name type="scientific">Escherichia coli O139:H28 (strain E24377A / ETEC)</name>
    <dbReference type="NCBI Taxonomy" id="331111"/>
    <lineage>
        <taxon>Bacteria</taxon>
        <taxon>Pseudomonadati</taxon>
        <taxon>Pseudomonadota</taxon>
        <taxon>Gammaproteobacteria</taxon>
        <taxon>Enterobacterales</taxon>
        <taxon>Enterobacteriaceae</taxon>
        <taxon>Escherichia</taxon>
    </lineage>
</organism>
<sequence length="591" mass="64977">MKKISLPKIGIRPVIDGRRMGVRESLEEQTMNMAKATAALLTEKLRHACGAAVECVISDTCIAGMAEAAACEEKFSSQNVGLTITVTPCWCYGSETIDMDPTRPKAIWGFNGTERPGAVYLAAALAAHSQKGIPAFSIYGHDVQDADDTSIPADVEEKLLRFARAGLAVASMKGKSYLSLGGVSMGIAGSIVDHNFFESWLGMKVQAVDMTELRRRIDQKIYDEAELEMALAWADKNFRYGEDENNKQYQRNAEQSRAVLRESLLMAMCIRDMMQGNSKLADIGRVEESLGYNAIAAGFQGQRHWTDQYPNGDTAEAILNSSFDWNGVREPFVVATENDSLNGVAMLMGHQLTGTAQVFADVRTYWSPEAIERVTGHKLDGLAEHGIIHLINSGSAALDGSCKQRDSEGNPTMKPHWEISQKEADACLAATEWCPAIHEYFRGGGYSSRFLTEGGVPFTMTRVNIIKGLGPVLQIAEGWSVELPKDVHDILNKRTNSTWPTTWFAPRLTGKGPFTDVYSVMANWGANHGVLTIGHVGADFITLASMLRIPVCMHNVEETKVYRPSAWAAHGMDIEGQDYRACQNYGPLYKR</sequence>
<comment type="function">
    <text evidence="1">Converts the aldose L-fucose into the corresponding ketose L-fuculose.</text>
</comment>
<comment type="catalytic activity">
    <reaction evidence="1">
        <text>L-fucose = L-fuculose</text>
        <dbReference type="Rhea" id="RHEA:17233"/>
        <dbReference type="ChEBI" id="CHEBI:2181"/>
        <dbReference type="ChEBI" id="CHEBI:17617"/>
        <dbReference type="EC" id="5.3.1.25"/>
    </reaction>
</comment>
<comment type="cofactor">
    <cofactor evidence="1">
        <name>Mn(2+)</name>
        <dbReference type="ChEBI" id="CHEBI:29035"/>
    </cofactor>
</comment>
<comment type="pathway">
    <text evidence="1">Carbohydrate degradation; L-fucose degradation; L-lactaldehyde and glycerone phosphate from L-fucose: step 1/3.</text>
</comment>
<comment type="subunit">
    <text evidence="1">Homohexamer.</text>
</comment>
<comment type="subcellular location">
    <subcellularLocation>
        <location evidence="1">Cytoplasm</location>
    </subcellularLocation>
</comment>
<comment type="similarity">
    <text evidence="1">Belongs to the L-fucose isomerase family.</text>
</comment>
<feature type="chain" id="PRO_1000067216" description="L-fucose isomerase">
    <location>
        <begin position="1"/>
        <end position="591"/>
    </location>
</feature>
<feature type="active site" description="Proton acceptor" evidence="1">
    <location>
        <position position="337"/>
    </location>
</feature>
<feature type="active site" description="Proton acceptor" evidence="1">
    <location>
        <position position="361"/>
    </location>
</feature>
<feature type="binding site" evidence="1">
    <location>
        <position position="337"/>
    </location>
    <ligand>
        <name>Mn(2+)</name>
        <dbReference type="ChEBI" id="CHEBI:29035"/>
    </ligand>
</feature>
<feature type="binding site" evidence="1">
    <location>
        <position position="361"/>
    </location>
    <ligand>
        <name>Mn(2+)</name>
        <dbReference type="ChEBI" id="CHEBI:29035"/>
    </ligand>
</feature>
<feature type="binding site" evidence="1">
    <location>
        <position position="528"/>
    </location>
    <ligand>
        <name>Mn(2+)</name>
        <dbReference type="ChEBI" id="CHEBI:29035"/>
    </ligand>
</feature>
<evidence type="ECO:0000255" key="1">
    <source>
        <dbReference type="HAMAP-Rule" id="MF_01254"/>
    </source>
</evidence>
<dbReference type="EC" id="5.3.1.25" evidence="1"/>
<dbReference type="EMBL" id="CP000800">
    <property type="protein sequence ID" value="ABV20293.1"/>
    <property type="molecule type" value="Genomic_DNA"/>
</dbReference>
<dbReference type="RefSeq" id="WP_000724150.1">
    <property type="nucleotide sequence ID" value="NC_009801.1"/>
</dbReference>
<dbReference type="SMR" id="A7ZQP6"/>
<dbReference type="GeneID" id="75203807"/>
<dbReference type="KEGG" id="ecw:EcE24377A_3107"/>
<dbReference type="HOGENOM" id="CLU_033326_1_0_6"/>
<dbReference type="UniPathway" id="UPA00563">
    <property type="reaction ID" value="UER00624"/>
</dbReference>
<dbReference type="Proteomes" id="UP000001122">
    <property type="component" value="Chromosome"/>
</dbReference>
<dbReference type="GO" id="GO:0005737">
    <property type="term" value="C:cytoplasm"/>
    <property type="evidence" value="ECO:0007669"/>
    <property type="project" value="UniProtKB-SubCell"/>
</dbReference>
<dbReference type="GO" id="GO:0008790">
    <property type="term" value="F:arabinose isomerase activity"/>
    <property type="evidence" value="ECO:0007669"/>
    <property type="project" value="TreeGrafter"/>
</dbReference>
<dbReference type="GO" id="GO:0008736">
    <property type="term" value="F:L-fucose isomerase activity"/>
    <property type="evidence" value="ECO:0007669"/>
    <property type="project" value="UniProtKB-UniRule"/>
</dbReference>
<dbReference type="GO" id="GO:0030145">
    <property type="term" value="F:manganese ion binding"/>
    <property type="evidence" value="ECO:0007669"/>
    <property type="project" value="UniProtKB-UniRule"/>
</dbReference>
<dbReference type="GO" id="GO:0019571">
    <property type="term" value="P:D-arabinose catabolic process"/>
    <property type="evidence" value="ECO:0007669"/>
    <property type="project" value="TreeGrafter"/>
</dbReference>
<dbReference type="GO" id="GO:0042355">
    <property type="term" value="P:L-fucose catabolic process"/>
    <property type="evidence" value="ECO:0007669"/>
    <property type="project" value="UniProtKB-UniRule"/>
</dbReference>
<dbReference type="CDD" id="cd03556">
    <property type="entry name" value="L-fucose_isomerase"/>
    <property type="match status" value="1"/>
</dbReference>
<dbReference type="FunFam" id="3.20.14.10:FF:000001">
    <property type="entry name" value="L-fucose isomerase"/>
    <property type="match status" value="1"/>
</dbReference>
<dbReference type="FunFam" id="3.40.275.10:FF:000001">
    <property type="entry name" value="L-fucose isomerase"/>
    <property type="match status" value="1"/>
</dbReference>
<dbReference type="FunFam" id="3.40.50.1070:FF:000001">
    <property type="entry name" value="L-fucose isomerase"/>
    <property type="match status" value="1"/>
</dbReference>
<dbReference type="Gene3D" id="3.40.50.1070">
    <property type="match status" value="1"/>
</dbReference>
<dbReference type="Gene3D" id="3.40.275.10">
    <property type="entry name" value="L-fucose Isomerase, Chain A, domain 2"/>
    <property type="match status" value="1"/>
</dbReference>
<dbReference type="Gene3D" id="3.20.14.10">
    <property type="entry name" value="L-fucose/L-arabinose isomerase, C-terminal"/>
    <property type="match status" value="1"/>
</dbReference>
<dbReference type="HAMAP" id="MF_01254">
    <property type="entry name" value="Fucose_iso"/>
    <property type="match status" value="1"/>
</dbReference>
<dbReference type="InterPro" id="IPR004216">
    <property type="entry name" value="Fuc/Ara_isomerase_C"/>
</dbReference>
<dbReference type="InterPro" id="IPR038393">
    <property type="entry name" value="Fuc_iso_dom3_sf"/>
</dbReference>
<dbReference type="InterPro" id="IPR015888">
    <property type="entry name" value="Fuc_isomerase_C"/>
</dbReference>
<dbReference type="InterPro" id="IPR038391">
    <property type="entry name" value="Fucose_iso_dom1_sf"/>
</dbReference>
<dbReference type="InterPro" id="IPR012888">
    <property type="entry name" value="Fucose_iso_N1"/>
</dbReference>
<dbReference type="InterPro" id="IPR005763">
    <property type="entry name" value="Fucose_isomerase"/>
</dbReference>
<dbReference type="InterPro" id="IPR038392">
    <property type="entry name" value="Fucose_isomerase_dom2_sf"/>
</dbReference>
<dbReference type="InterPro" id="IPR009015">
    <property type="entry name" value="Fucose_isomerase_N/cen_sf"/>
</dbReference>
<dbReference type="InterPro" id="IPR012889">
    <property type="entry name" value="Fucose_isomerase_N2"/>
</dbReference>
<dbReference type="NCBIfam" id="TIGR01089">
    <property type="entry name" value="fucI"/>
    <property type="match status" value="1"/>
</dbReference>
<dbReference type="NCBIfam" id="NF008220">
    <property type="entry name" value="PRK10991.1"/>
    <property type="match status" value="1"/>
</dbReference>
<dbReference type="PANTHER" id="PTHR37840">
    <property type="entry name" value="L-FUCOSE ISOMERASE"/>
    <property type="match status" value="1"/>
</dbReference>
<dbReference type="PANTHER" id="PTHR37840:SF1">
    <property type="entry name" value="L-FUCOSE ISOMERASE"/>
    <property type="match status" value="1"/>
</dbReference>
<dbReference type="Pfam" id="PF02952">
    <property type="entry name" value="Fucose_iso_C"/>
    <property type="match status" value="1"/>
</dbReference>
<dbReference type="Pfam" id="PF07881">
    <property type="entry name" value="Fucose_iso_N1"/>
    <property type="match status" value="1"/>
</dbReference>
<dbReference type="Pfam" id="PF07882">
    <property type="entry name" value="Fucose_iso_N2"/>
    <property type="match status" value="1"/>
</dbReference>
<dbReference type="SUPFAM" id="SSF50443">
    <property type="entry name" value="FucI/AraA C-terminal domain-like"/>
    <property type="match status" value="1"/>
</dbReference>
<dbReference type="SUPFAM" id="SSF53743">
    <property type="entry name" value="FucI/AraA N-terminal and middle domains"/>
    <property type="match status" value="1"/>
</dbReference>
<gene>
    <name evidence="1" type="primary">fucI</name>
    <name type="ordered locus">EcE24377A_3107</name>
</gene>